<feature type="chain" id="PRO_0000237390" description="Glutamate--tRNA ligase">
    <location>
        <begin position="1"/>
        <end position="493"/>
    </location>
</feature>
<feature type="short sequence motif" description="'HIGH' region" evidence="1">
    <location>
        <begin position="10"/>
        <end position="20"/>
    </location>
</feature>
<feature type="short sequence motif" description="'KMSKS' region" evidence="1">
    <location>
        <begin position="251"/>
        <end position="255"/>
    </location>
</feature>
<feature type="binding site" evidence="1">
    <location>
        <position position="254"/>
    </location>
    <ligand>
        <name>ATP</name>
        <dbReference type="ChEBI" id="CHEBI:30616"/>
    </ligand>
</feature>
<accession>Q48KA5</accession>
<comment type="function">
    <text evidence="1">Catalyzes the attachment of glutamate to tRNA(Glu) in a two-step reaction: glutamate is first activated by ATP to form Glu-AMP and then transferred to the acceptor end of tRNA(Glu).</text>
</comment>
<comment type="catalytic activity">
    <reaction evidence="1">
        <text>tRNA(Glu) + L-glutamate + ATP = L-glutamyl-tRNA(Glu) + AMP + diphosphate</text>
        <dbReference type="Rhea" id="RHEA:23540"/>
        <dbReference type="Rhea" id="RHEA-COMP:9663"/>
        <dbReference type="Rhea" id="RHEA-COMP:9680"/>
        <dbReference type="ChEBI" id="CHEBI:29985"/>
        <dbReference type="ChEBI" id="CHEBI:30616"/>
        <dbReference type="ChEBI" id="CHEBI:33019"/>
        <dbReference type="ChEBI" id="CHEBI:78442"/>
        <dbReference type="ChEBI" id="CHEBI:78520"/>
        <dbReference type="ChEBI" id="CHEBI:456215"/>
        <dbReference type="EC" id="6.1.1.17"/>
    </reaction>
</comment>
<comment type="subunit">
    <text evidence="1">Monomer.</text>
</comment>
<comment type="subcellular location">
    <subcellularLocation>
        <location evidence="1">Cytoplasm</location>
    </subcellularLocation>
</comment>
<comment type="similarity">
    <text evidence="1">Belongs to the class-I aminoacyl-tRNA synthetase family. Glutamate--tRNA ligase type 1 subfamily.</text>
</comment>
<dbReference type="EC" id="6.1.1.17" evidence="1"/>
<dbReference type="EMBL" id="CP000058">
    <property type="protein sequence ID" value="AAZ37381.1"/>
    <property type="molecule type" value="Genomic_DNA"/>
</dbReference>
<dbReference type="RefSeq" id="WP_011168303.1">
    <property type="nucleotide sequence ID" value="NC_005773.3"/>
</dbReference>
<dbReference type="SMR" id="Q48KA5"/>
<dbReference type="KEGG" id="psp:PSPPH_1942"/>
<dbReference type="eggNOG" id="COG0008">
    <property type="taxonomic scope" value="Bacteria"/>
</dbReference>
<dbReference type="HOGENOM" id="CLU_015768_6_3_6"/>
<dbReference type="Proteomes" id="UP000000551">
    <property type="component" value="Chromosome"/>
</dbReference>
<dbReference type="GO" id="GO:0005829">
    <property type="term" value="C:cytosol"/>
    <property type="evidence" value="ECO:0007669"/>
    <property type="project" value="TreeGrafter"/>
</dbReference>
<dbReference type="GO" id="GO:0005524">
    <property type="term" value="F:ATP binding"/>
    <property type="evidence" value="ECO:0007669"/>
    <property type="project" value="UniProtKB-UniRule"/>
</dbReference>
<dbReference type="GO" id="GO:0004818">
    <property type="term" value="F:glutamate-tRNA ligase activity"/>
    <property type="evidence" value="ECO:0007669"/>
    <property type="project" value="UniProtKB-UniRule"/>
</dbReference>
<dbReference type="GO" id="GO:0000049">
    <property type="term" value="F:tRNA binding"/>
    <property type="evidence" value="ECO:0007669"/>
    <property type="project" value="InterPro"/>
</dbReference>
<dbReference type="GO" id="GO:0008270">
    <property type="term" value="F:zinc ion binding"/>
    <property type="evidence" value="ECO:0007669"/>
    <property type="project" value="InterPro"/>
</dbReference>
<dbReference type="GO" id="GO:0006424">
    <property type="term" value="P:glutamyl-tRNA aminoacylation"/>
    <property type="evidence" value="ECO:0007669"/>
    <property type="project" value="UniProtKB-UniRule"/>
</dbReference>
<dbReference type="CDD" id="cd00808">
    <property type="entry name" value="GluRS_core"/>
    <property type="match status" value="1"/>
</dbReference>
<dbReference type="FunFam" id="1.10.10.350:FF:000007">
    <property type="entry name" value="Glutamate--tRNA ligase"/>
    <property type="match status" value="1"/>
</dbReference>
<dbReference type="FunFam" id="3.40.50.620:FF:000045">
    <property type="entry name" value="Glutamate--tRNA ligase, mitochondrial"/>
    <property type="match status" value="1"/>
</dbReference>
<dbReference type="Gene3D" id="1.10.10.350">
    <property type="match status" value="1"/>
</dbReference>
<dbReference type="Gene3D" id="3.40.50.620">
    <property type="entry name" value="HUPs"/>
    <property type="match status" value="1"/>
</dbReference>
<dbReference type="HAMAP" id="MF_00022">
    <property type="entry name" value="Glu_tRNA_synth_type1"/>
    <property type="match status" value="1"/>
</dbReference>
<dbReference type="InterPro" id="IPR045462">
    <property type="entry name" value="aa-tRNA-synth_I_cd-bd"/>
</dbReference>
<dbReference type="InterPro" id="IPR020751">
    <property type="entry name" value="aa-tRNA-synth_I_codon-bd_sub2"/>
</dbReference>
<dbReference type="InterPro" id="IPR001412">
    <property type="entry name" value="aa-tRNA-synth_I_CS"/>
</dbReference>
<dbReference type="InterPro" id="IPR008925">
    <property type="entry name" value="aa_tRNA-synth_I_cd-bd_sf"/>
</dbReference>
<dbReference type="InterPro" id="IPR004527">
    <property type="entry name" value="Glu-tRNA-ligase_bac/mito"/>
</dbReference>
<dbReference type="InterPro" id="IPR000924">
    <property type="entry name" value="Glu/Gln-tRNA-synth"/>
</dbReference>
<dbReference type="InterPro" id="IPR020058">
    <property type="entry name" value="Glu/Gln-tRNA-synth_Ib_cat-dom"/>
</dbReference>
<dbReference type="InterPro" id="IPR049940">
    <property type="entry name" value="GluQ/Sye"/>
</dbReference>
<dbReference type="InterPro" id="IPR033910">
    <property type="entry name" value="GluRS_core"/>
</dbReference>
<dbReference type="InterPro" id="IPR014729">
    <property type="entry name" value="Rossmann-like_a/b/a_fold"/>
</dbReference>
<dbReference type="NCBIfam" id="TIGR00464">
    <property type="entry name" value="gltX_bact"/>
    <property type="match status" value="1"/>
</dbReference>
<dbReference type="PANTHER" id="PTHR43311">
    <property type="entry name" value="GLUTAMATE--TRNA LIGASE"/>
    <property type="match status" value="1"/>
</dbReference>
<dbReference type="PANTHER" id="PTHR43311:SF2">
    <property type="entry name" value="GLUTAMATE--TRNA LIGASE, MITOCHONDRIAL-RELATED"/>
    <property type="match status" value="1"/>
</dbReference>
<dbReference type="Pfam" id="PF19269">
    <property type="entry name" value="Anticodon_2"/>
    <property type="match status" value="1"/>
</dbReference>
<dbReference type="Pfam" id="PF00749">
    <property type="entry name" value="tRNA-synt_1c"/>
    <property type="match status" value="1"/>
</dbReference>
<dbReference type="PRINTS" id="PR00987">
    <property type="entry name" value="TRNASYNTHGLU"/>
</dbReference>
<dbReference type="SUPFAM" id="SSF48163">
    <property type="entry name" value="An anticodon-binding domain of class I aminoacyl-tRNA synthetases"/>
    <property type="match status" value="1"/>
</dbReference>
<dbReference type="SUPFAM" id="SSF52374">
    <property type="entry name" value="Nucleotidylyl transferase"/>
    <property type="match status" value="1"/>
</dbReference>
<dbReference type="PROSITE" id="PS00178">
    <property type="entry name" value="AA_TRNA_LIGASE_I"/>
    <property type="match status" value="1"/>
</dbReference>
<protein>
    <recommendedName>
        <fullName evidence="1">Glutamate--tRNA ligase</fullName>
        <ecNumber evidence="1">6.1.1.17</ecNumber>
    </recommendedName>
    <alternativeName>
        <fullName evidence="1">Glutamyl-tRNA synthetase</fullName>
        <shortName evidence="1">GluRS</shortName>
    </alternativeName>
</protein>
<name>SYE_PSE14</name>
<proteinExistence type="inferred from homology"/>
<reference key="1">
    <citation type="journal article" date="2005" name="J. Bacteriol.">
        <title>Whole-genome sequence analysis of Pseudomonas syringae pv. phaseolicola 1448A reveals divergence among pathovars in genes involved in virulence and transposition.</title>
        <authorList>
            <person name="Joardar V."/>
            <person name="Lindeberg M."/>
            <person name="Jackson R.W."/>
            <person name="Selengut J."/>
            <person name="Dodson R."/>
            <person name="Brinkac L.M."/>
            <person name="Daugherty S.C."/>
            <person name="DeBoy R.T."/>
            <person name="Durkin A.S."/>
            <person name="Gwinn Giglio M."/>
            <person name="Madupu R."/>
            <person name="Nelson W.C."/>
            <person name="Rosovitz M.J."/>
            <person name="Sullivan S.A."/>
            <person name="Crabtree J."/>
            <person name="Creasy T."/>
            <person name="Davidsen T.M."/>
            <person name="Haft D.H."/>
            <person name="Zafar N."/>
            <person name="Zhou L."/>
            <person name="Halpin R."/>
            <person name="Holley T."/>
            <person name="Khouri H.M."/>
            <person name="Feldblyum T.V."/>
            <person name="White O."/>
            <person name="Fraser C.M."/>
            <person name="Chatterjee A.K."/>
            <person name="Cartinhour S."/>
            <person name="Schneider D."/>
            <person name="Mansfield J.W."/>
            <person name="Collmer A."/>
            <person name="Buell R."/>
        </authorList>
    </citation>
    <scope>NUCLEOTIDE SEQUENCE [LARGE SCALE GENOMIC DNA]</scope>
    <source>
        <strain>1448A / Race 6</strain>
    </source>
</reference>
<sequence>MTTVRTRIAPSPTGDPHVGTAYIALFNYCFAKQHGGEFILRIEDTDQLRSTRESEQQIFDALRWMGIEWSEGPDVGGPHGPYRQSERGDIYQKYAQQLVELGHAFPCFCTAEELDEMRAEQQAKGETPRYDGRALLLSKEEVQRRLDAGEPHVIRMKVPTEGVCVVPDMLRGEVEIPWDRMDMQVLMKTDGLPTYFLANVVDDHLMGITHVLRGEEWLPSAPKLILLYEYFGWDKPQLCYMPLLRNPDKSKLSKRKNPTSVTFYERMGFMPEAMLNYLGRMGWSMPDEREKFSLQEMVDNFDLSRVSLGGPIFDIEKLSWLNGQWLRDLPVEEFASRLKTWALNPDYMMKIAPHVQGRVETFSQVAPLAGFFFAGGVTPDVKLFEHKKLSPEQVRQVMQLILWKLESLRQWEKDRIMGCIQAVVEHLKLKLRDAMPLMFAAITGQANSVSVTDAMEILGPDLTRFRLRQALDLLGGVSKKENKEWEKLLGSIA</sequence>
<evidence type="ECO:0000255" key="1">
    <source>
        <dbReference type="HAMAP-Rule" id="MF_00022"/>
    </source>
</evidence>
<organism>
    <name type="scientific">Pseudomonas savastanoi pv. phaseolicola (strain 1448A / Race 6)</name>
    <name type="common">Pseudomonas syringae pv. phaseolicola (strain 1448A / Race 6)</name>
    <dbReference type="NCBI Taxonomy" id="264730"/>
    <lineage>
        <taxon>Bacteria</taxon>
        <taxon>Pseudomonadati</taxon>
        <taxon>Pseudomonadota</taxon>
        <taxon>Gammaproteobacteria</taxon>
        <taxon>Pseudomonadales</taxon>
        <taxon>Pseudomonadaceae</taxon>
        <taxon>Pseudomonas</taxon>
    </lineage>
</organism>
<gene>
    <name evidence="1" type="primary">gltX</name>
    <name type="ordered locus">PSPPH_1942</name>
</gene>
<keyword id="KW-0030">Aminoacyl-tRNA synthetase</keyword>
<keyword id="KW-0067">ATP-binding</keyword>
<keyword id="KW-0963">Cytoplasm</keyword>
<keyword id="KW-0436">Ligase</keyword>
<keyword id="KW-0547">Nucleotide-binding</keyword>
<keyword id="KW-0648">Protein biosynthesis</keyword>